<name>TX2B_DINQU</name>
<protein>
    <recommendedName>
        <fullName evidence="3">U1-poneritoxin-Dq2b</fullName>
        <shortName evidence="3">U1-PONTX-Dq2b</shortName>
    </recommendedName>
    <alternativeName>
        <fullName evidence="2">Peptide Dq-1133</fullName>
    </alternativeName>
    <alternativeName>
        <fullName evidence="4">Poneratoxin</fullName>
    </alternativeName>
</protein>
<reference key="1">
    <citation type="journal article" date="2013" name="J. Proteomics">
        <title>Peptidomic comparison and characterization of the major components of the venom of the giant ant Dinoponera quadriceps collected in four different areas of Brazil.</title>
        <authorList>
            <person name="Cologna C.T."/>
            <person name="Cardoso Jdos S."/>
            <person name="Jourdan E."/>
            <person name="Degueldre M."/>
            <person name="Upert G."/>
            <person name="Gilles N."/>
            <person name="Uetanabaro A.P."/>
            <person name="Costa Neto E.M."/>
            <person name="Thonart P."/>
            <person name="de Pauw E."/>
            <person name="Quinton L."/>
        </authorList>
    </citation>
    <scope>PROTEIN SEQUENCE</scope>
    <scope>SUBCELLULAR LOCATION</scope>
    <scope>MASS SPECTROMETRY</scope>
    <source>
        <tissue>Venom</tissue>
    </source>
</reference>
<reference key="2">
    <citation type="journal article" date="2016" name="Toxins">
        <title>The biochemical toxin arsenal from ant venoms.</title>
        <authorList>
            <person name="Touchard A."/>
            <person name="Aili S.R."/>
            <person name="Fox E.G."/>
            <person name="Escoubas P."/>
            <person name="Orivel J."/>
            <person name="Nicholson G.M."/>
            <person name="Dejean A."/>
        </authorList>
    </citation>
    <scope>REVIEW</scope>
    <scope>NOMENCLATURE</scope>
</reference>
<dbReference type="Proteomes" id="UP000515204">
    <property type="component" value="Unplaced"/>
</dbReference>
<dbReference type="GO" id="GO:0005576">
    <property type="term" value="C:extracellular region"/>
    <property type="evidence" value="ECO:0007669"/>
    <property type="project" value="UniProtKB-SubCell"/>
</dbReference>
<organism>
    <name type="scientific">Dinoponera quadriceps</name>
    <name type="common">South American ant</name>
    <dbReference type="NCBI Taxonomy" id="609295"/>
    <lineage>
        <taxon>Eukaryota</taxon>
        <taxon>Metazoa</taxon>
        <taxon>Ecdysozoa</taxon>
        <taxon>Arthropoda</taxon>
        <taxon>Hexapoda</taxon>
        <taxon>Insecta</taxon>
        <taxon>Pterygota</taxon>
        <taxon>Neoptera</taxon>
        <taxon>Endopterygota</taxon>
        <taxon>Hymenoptera</taxon>
        <taxon>Apocrita</taxon>
        <taxon>Aculeata</taxon>
        <taxon>Formicoidea</taxon>
        <taxon>Formicidae</taxon>
        <taxon>Ponerinae</taxon>
        <taxon>Ponerini</taxon>
        <taxon>Dinoponera</taxon>
    </lineage>
</organism>
<keyword id="KW-0929">Antimicrobial</keyword>
<keyword id="KW-0903">Direct protein sequencing</keyword>
<keyword id="KW-1185">Reference proteome</keyword>
<keyword id="KW-0964">Secreted</keyword>
<keyword id="KW-0712">Selenocysteine</keyword>
<proteinExistence type="evidence at protein level"/>
<comment type="function">
    <text evidence="4">May have antimicrobial properties, like most ant linear peptides.</text>
</comment>
<comment type="subcellular location">
    <subcellularLocation>
        <location evidence="1">Secreted</location>
    </subcellularLocation>
</comment>
<comment type="tissue specificity">
    <text evidence="5">Expressed by the venom gland.</text>
</comment>
<comment type="mass spectrometry" mass="1133.7" method="Electrospray" evidence="1"/>
<feature type="peptide" id="PRO_0000430029" description="U1-poneritoxin-Dq2b" evidence="1">
    <location>
        <begin position="1"/>
        <end position="9"/>
    </location>
</feature>
<feature type="non-standard amino acid" description="Selenocysteine" evidence="1">
    <location>
        <position position="8"/>
    </location>
</feature>
<feature type="unsure residue" description="L or I" evidence="1">
    <location>
        <position position="4"/>
    </location>
</feature>
<feature type="unsure residue" description="L or I" evidence="1">
    <location>
        <position position="7"/>
    </location>
</feature>
<feature type="unsure residue" description="L or I" evidence="1">
    <location>
        <position position="9"/>
    </location>
</feature>
<evidence type="ECO:0000269" key="1">
    <source>
    </source>
</evidence>
<evidence type="ECO:0000303" key="2">
    <source>
    </source>
</evidence>
<evidence type="ECO:0000303" key="3">
    <source>
    </source>
</evidence>
<evidence type="ECO:0000305" key="4"/>
<evidence type="ECO:0000305" key="5">
    <source>
    </source>
</evidence>
<accession>C0HJK3</accession>
<sequence length="9" mass="1057">AHFLPPLUL</sequence>